<evidence type="ECO:0000255" key="1">
    <source>
        <dbReference type="HAMAP-Rule" id="MF_01307"/>
    </source>
</evidence>
<evidence type="ECO:0000269" key="2">
    <source>
    </source>
</evidence>
<evidence type="ECO:0000305" key="3"/>
<evidence type="ECO:0007744" key="4">
    <source>
        <dbReference type="PDB" id="6SKF"/>
    </source>
</evidence>
<evidence type="ECO:0007744" key="5">
    <source>
        <dbReference type="PDB" id="6SKG"/>
    </source>
</evidence>
<evidence type="ECO:0007744" key="6">
    <source>
        <dbReference type="PDB" id="6TH6"/>
    </source>
</evidence>
<dbReference type="EMBL" id="AP006878">
    <property type="protein sequence ID" value="BAD85710.1"/>
    <property type="molecule type" value="Genomic_DNA"/>
</dbReference>
<dbReference type="RefSeq" id="WP_011250472.1">
    <property type="nucleotide sequence ID" value="NC_006624.1"/>
</dbReference>
<dbReference type="PDB" id="6SKF">
    <property type="method" value="EM"/>
    <property type="resolution" value="2.95 A"/>
    <property type="chains" value="Ag=1-235"/>
</dbReference>
<dbReference type="PDB" id="6SKG">
    <property type="method" value="EM"/>
    <property type="resolution" value="2.65 A"/>
    <property type="chains" value="Ag=1-235"/>
</dbReference>
<dbReference type="PDB" id="6TH6">
    <property type="method" value="EM"/>
    <property type="resolution" value="2.55 A"/>
    <property type="chains" value="Ag=1-235"/>
</dbReference>
<dbReference type="PDBsum" id="6SKF"/>
<dbReference type="PDBsum" id="6SKG"/>
<dbReference type="PDBsum" id="6TH6"/>
<dbReference type="EMDB" id="EMD-10223"/>
<dbReference type="EMDB" id="EMD-10224"/>
<dbReference type="EMDB" id="EMD-10503"/>
<dbReference type="SMR" id="Q5JJG8"/>
<dbReference type="FunCoup" id="Q5JJG8">
    <property type="interactions" value="182"/>
</dbReference>
<dbReference type="IntAct" id="Q5JJG8">
    <property type="interactions" value="1"/>
</dbReference>
<dbReference type="MINT" id="Q5JJG8"/>
<dbReference type="STRING" id="69014.TK1521"/>
<dbReference type="EnsemblBacteria" id="BAD85710">
    <property type="protein sequence ID" value="BAD85710"/>
    <property type="gene ID" value="TK1521"/>
</dbReference>
<dbReference type="GeneID" id="78448049"/>
<dbReference type="KEGG" id="tko:TK1521"/>
<dbReference type="PATRIC" id="fig|69014.16.peg.1481"/>
<dbReference type="eggNOG" id="arCOG04087">
    <property type="taxonomic scope" value="Archaea"/>
</dbReference>
<dbReference type="HOGENOM" id="CLU_065898_0_1_2"/>
<dbReference type="InParanoid" id="Q5JJG8"/>
<dbReference type="OrthoDB" id="38155at2157"/>
<dbReference type="PhylomeDB" id="Q5JJG8"/>
<dbReference type="Proteomes" id="UP000000536">
    <property type="component" value="Chromosome"/>
</dbReference>
<dbReference type="GO" id="GO:0022627">
    <property type="term" value="C:cytosolic small ribosomal subunit"/>
    <property type="evidence" value="ECO:0000318"/>
    <property type="project" value="GO_Central"/>
</dbReference>
<dbReference type="GO" id="GO:0046872">
    <property type="term" value="F:metal ion binding"/>
    <property type="evidence" value="ECO:0007669"/>
    <property type="project" value="UniProtKB-KW"/>
</dbReference>
<dbReference type="GO" id="GO:0019843">
    <property type="term" value="F:rRNA binding"/>
    <property type="evidence" value="ECO:0007669"/>
    <property type="project" value="UniProtKB-UniRule"/>
</dbReference>
<dbReference type="GO" id="GO:0003735">
    <property type="term" value="F:structural constituent of ribosome"/>
    <property type="evidence" value="ECO:0000318"/>
    <property type="project" value="GO_Central"/>
</dbReference>
<dbReference type="GO" id="GO:0006412">
    <property type="term" value="P:translation"/>
    <property type="evidence" value="ECO:0000318"/>
    <property type="project" value="GO_Central"/>
</dbReference>
<dbReference type="FunFam" id="3.30.160.20:FF:000002">
    <property type="entry name" value="40S ribosomal protein S2"/>
    <property type="match status" value="1"/>
</dbReference>
<dbReference type="FunFam" id="3.30.230.10:FF:000004">
    <property type="entry name" value="40S ribosomal protein S2"/>
    <property type="match status" value="1"/>
</dbReference>
<dbReference type="Gene3D" id="3.30.160.20">
    <property type="match status" value="1"/>
</dbReference>
<dbReference type="Gene3D" id="3.30.230.10">
    <property type="match status" value="1"/>
</dbReference>
<dbReference type="HAMAP" id="MF_01307_A">
    <property type="entry name" value="Ribosomal_uS5_A"/>
    <property type="match status" value="1"/>
</dbReference>
<dbReference type="InterPro" id="IPR020568">
    <property type="entry name" value="Ribosomal_Su5_D2-typ_SF"/>
</dbReference>
<dbReference type="InterPro" id="IPR000851">
    <property type="entry name" value="Ribosomal_uS5"/>
</dbReference>
<dbReference type="InterPro" id="IPR047866">
    <property type="entry name" value="Ribosomal_uS5_arc"/>
</dbReference>
<dbReference type="InterPro" id="IPR005324">
    <property type="entry name" value="Ribosomal_uS5_C"/>
</dbReference>
<dbReference type="InterPro" id="IPR005711">
    <property type="entry name" value="Ribosomal_uS5_euk/arc"/>
</dbReference>
<dbReference type="InterPro" id="IPR013810">
    <property type="entry name" value="Ribosomal_uS5_N"/>
</dbReference>
<dbReference type="InterPro" id="IPR018192">
    <property type="entry name" value="Ribosomal_uS5_N_CS"/>
</dbReference>
<dbReference type="InterPro" id="IPR014721">
    <property type="entry name" value="Ribsml_uS5_D2-typ_fold_subgr"/>
</dbReference>
<dbReference type="NCBIfam" id="NF003125">
    <property type="entry name" value="PRK04044.1"/>
    <property type="match status" value="1"/>
</dbReference>
<dbReference type="NCBIfam" id="TIGR01020">
    <property type="entry name" value="uS5_euk_arch"/>
    <property type="match status" value="1"/>
</dbReference>
<dbReference type="PANTHER" id="PTHR13718:SF4">
    <property type="entry name" value="40S RIBOSOMAL PROTEIN S2"/>
    <property type="match status" value="1"/>
</dbReference>
<dbReference type="PANTHER" id="PTHR13718">
    <property type="entry name" value="RIBOSOMAL S SUBUNIT"/>
    <property type="match status" value="1"/>
</dbReference>
<dbReference type="Pfam" id="PF00333">
    <property type="entry name" value="Ribosomal_S5"/>
    <property type="match status" value="1"/>
</dbReference>
<dbReference type="Pfam" id="PF03719">
    <property type="entry name" value="Ribosomal_S5_C"/>
    <property type="match status" value="1"/>
</dbReference>
<dbReference type="SUPFAM" id="SSF54768">
    <property type="entry name" value="dsRNA-binding domain-like"/>
    <property type="match status" value="1"/>
</dbReference>
<dbReference type="SUPFAM" id="SSF54211">
    <property type="entry name" value="Ribosomal protein S5 domain 2-like"/>
    <property type="match status" value="1"/>
</dbReference>
<dbReference type="PROSITE" id="PS00585">
    <property type="entry name" value="RIBOSOMAL_S5"/>
    <property type="match status" value="1"/>
</dbReference>
<dbReference type="PROSITE" id="PS50881">
    <property type="entry name" value="S5_DSRBD"/>
    <property type="match status" value="1"/>
</dbReference>
<reference key="1">
    <citation type="journal article" date="2005" name="Genome Res.">
        <title>Complete genome sequence of the hyperthermophilic archaeon Thermococcus kodakaraensis KOD1 and comparison with Pyrococcus genomes.</title>
        <authorList>
            <person name="Fukui T."/>
            <person name="Atomi H."/>
            <person name="Kanai T."/>
            <person name="Matsumi R."/>
            <person name="Fujiwara S."/>
            <person name="Imanaka T."/>
        </authorList>
    </citation>
    <scope>NUCLEOTIDE SEQUENCE [LARGE SCALE GENOMIC DNA]</scope>
    <source>
        <strain>ATCC BAA-918 / JCM 12380 / KOD1</strain>
    </source>
</reference>
<reference evidence="4 5 6" key="2">
    <citation type="journal article" date="2020" name="Nature">
        <title>Dynamic RNA acetylation revealed by quantitative cross-evolutionary mapping.</title>
        <authorList>
            <person name="Sas-Chen A."/>
            <person name="Thomas J.M."/>
            <person name="Matzov D."/>
            <person name="Taoka M."/>
            <person name="Nance K.D."/>
            <person name="Nir R."/>
            <person name="Bryson K.M."/>
            <person name="Shachar R."/>
            <person name="Liman G.L.S."/>
            <person name="Burkhart B.W."/>
            <person name="Gamage S.T."/>
            <person name="Nobe Y."/>
            <person name="Briney C.A."/>
            <person name="Levy M.J."/>
            <person name="Fuchs R.T."/>
            <person name="Robb G.B."/>
            <person name="Hartmann J."/>
            <person name="Sharma S."/>
            <person name="Lin Q."/>
            <person name="Florens L."/>
            <person name="Washburn M.P."/>
            <person name="Isobe T."/>
            <person name="Santangelo T.J."/>
            <person name="Shalev-Benami M."/>
            <person name="Meier J.L."/>
            <person name="Schwartz S."/>
        </authorList>
    </citation>
    <scope>STRUCTURE BY ELECTRON MICROSCOPY (2.55 ANGSTROMS) IN 70S RIBOSOME IN COMPLEX WITH ZN(2+)</scope>
    <scope>SUBUNIT</scope>
    <source>
        <strain>ATCC BAA-918 / TS559</strain>
    </source>
</reference>
<name>RS5_THEKO</name>
<keyword id="KW-0002">3D-structure</keyword>
<keyword id="KW-0479">Metal-binding</keyword>
<keyword id="KW-1185">Reference proteome</keyword>
<keyword id="KW-0687">Ribonucleoprotein</keyword>
<keyword id="KW-0689">Ribosomal protein</keyword>
<keyword id="KW-0694">RNA-binding</keyword>
<keyword id="KW-0699">rRNA-binding</keyword>
<keyword id="KW-0862">Zinc</keyword>
<proteinExistence type="evidence at protein level"/>
<feature type="chain" id="PRO_0000131659" description="Small ribosomal subunit protein uS5">
    <location>
        <begin position="1"/>
        <end position="235"/>
    </location>
</feature>
<feature type="domain" description="S5 DRBM" evidence="1">
    <location>
        <begin position="60"/>
        <end position="123"/>
    </location>
</feature>
<feature type="binding site" evidence="4 5 6">
    <location>
        <position position="127"/>
    </location>
    <ligand>
        <name>Zn(2+)</name>
        <dbReference type="ChEBI" id="CHEBI:29105"/>
    </ligand>
</feature>
<feature type="binding site" evidence="4 5 6">
    <location>
        <position position="132"/>
    </location>
    <ligand>
        <name>Zn(2+)</name>
        <dbReference type="ChEBI" id="CHEBI:29105"/>
    </ligand>
</feature>
<feature type="binding site" evidence="4 5 6">
    <location>
        <position position="134"/>
    </location>
    <ligand>
        <name>Zn(2+)</name>
        <dbReference type="ChEBI" id="CHEBI:29105"/>
    </ligand>
</feature>
<feature type="binding site" evidence="4 5 6">
    <location>
        <position position="138"/>
    </location>
    <ligand>
        <name>Zn(2+)</name>
        <dbReference type="ChEBI" id="CHEBI:29105"/>
    </ligand>
</feature>
<comment type="function">
    <text evidence="1">With S4 and S12 plays an important role in translational accuracy.</text>
</comment>
<comment type="cofactor">
    <cofactor evidence="4 5 6">
        <name>Zn(2+)</name>
        <dbReference type="ChEBI" id="CHEBI:29105"/>
    </cofactor>
    <text evidence="4 5 6">Binds 1 Zn(2+) ion per subunit.</text>
</comment>
<comment type="subunit">
    <text evidence="1 2">Part of the 30S ribosomal subunit (PubMed:32555463). Contacts protein S4.</text>
</comment>
<comment type="domain">
    <text>The N-terminal domain interacts with the head of the 30S subunit; the C-terminal domain interacts with the body and contacts protein S4. The interaction surface between S4 and S5 is involved in control of translational fidelity.</text>
</comment>
<comment type="similarity">
    <text evidence="1">Belongs to the universal ribosomal protein uS5 family.</text>
</comment>
<gene>
    <name evidence="1" type="primary">rps5</name>
    <name type="ordered locus">TK1521</name>
</gene>
<organism>
    <name type="scientific">Thermococcus kodakarensis (strain ATCC BAA-918 / JCM 12380 / KOD1)</name>
    <name type="common">Pyrococcus kodakaraensis (strain KOD1)</name>
    <dbReference type="NCBI Taxonomy" id="69014"/>
    <lineage>
        <taxon>Archaea</taxon>
        <taxon>Methanobacteriati</taxon>
        <taxon>Methanobacteriota</taxon>
        <taxon>Thermococci</taxon>
        <taxon>Thermococcales</taxon>
        <taxon>Thermococcaceae</taxon>
        <taxon>Thermococcus</taxon>
    </lineage>
</organism>
<protein>
    <recommendedName>
        <fullName evidence="1">Small ribosomal subunit protein uS5</fullName>
    </recommendedName>
    <alternativeName>
        <fullName evidence="3">30S ribosomal protein S5</fullName>
    </alternativeName>
</protein>
<sequence>MSDPREIAQRVLEEWEPKTKLGRLVKEGQITDIHEIFRKGYQIKEPEIVDVLLPEVNLRENQEVLDIALTVRMTDSGRRIRFRVLAAVGNRDGYVGLGIGHGREVGIAIRKAINYAKMNIIEIKRGCGSWECRCRRPHSIPFAVEGKEGSVRVKLMPGPRGLGLVIGDVGKKILTLAGVQDVWSQTLGETRTTVNFAKAVFNALYNTNRVAIKPEDIERYGIVVGRAMPTTFEVE</sequence>
<accession>Q5JJG8</accession>